<evidence type="ECO:0000255" key="1">
    <source>
        <dbReference type="HAMAP-Rule" id="MF_01152"/>
    </source>
</evidence>
<comment type="function">
    <text evidence="1">Participates actively in the response to hyperosmotic and heat shock by preventing the aggregation of stress-denatured proteins and by disaggregating proteins, also in an autonomous, DnaK-independent fashion. Unfolded proteins bind initially to DnaJ; upon interaction with the DnaJ-bound protein, DnaK hydrolyzes its bound ATP, resulting in the formation of a stable complex. GrpE releases ADP from DnaK; ATP binding to DnaK triggers the release of the substrate protein, thus completing the reaction cycle. Several rounds of ATP-dependent interactions between DnaJ, DnaK and GrpE are required for fully efficient folding. Also involved, together with DnaK and GrpE, in the DNA replication of plasmids through activation of initiation proteins.</text>
</comment>
<comment type="cofactor">
    <cofactor evidence="1">
        <name>Zn(2+)</name>
        <dbReference type="ChEBI" id="CHEBI:29105"/>
    </cofactor>
    <text evidence="1">Binds 2 Zn(2+) ions per monomer.</text>
</comment>
<comment type="subunit">
    <text evidence="1">Homodimer.</text>
</comment>
<comment type="subcellular location">
    <subcellularLocation>
        <location evidence="1">Cytoplasm</location>
    </subcellularLocation>
</comment>
<comment type="domain">
    <text evidence="1">The J domain is necessary and sufficient to stimulate DnaK ATPase activity. Zinc center 1 plays an important role in the autonomous, DnaK-independent chaperone activity of DnaJ. Zinc center 2 is essential for interaction with DnaK and for DnaJ activity.</text>
</comment>
<comment type="similarity">
    <text evidence="1">Belongs to the DnaJ family.</text>
</comment>
<dbReference type="EMBL" id="AP009240">
    <property type="protein sequence ID" value="BAG75538.1"/>
    <property type="molecule type" value="Genomic_DNA"/>
</dbReference>
<dbReference type="RefSeq" id="WP_001118464.1">
    <property type="nucleotide sequence ID" value="NC_011415.1"/>
</dbReference>
<dbReference type="SMR" id="B6HZ11"/>
<dbReference type="GeneID" id="93777428"/>
<dbReference type="KEGG" id="ecy:ECSE_0014"/>
<dbReference type="HOGENOM" id="CLU_017633_0_7_6"/>
<dbReference type="Proteomes" id="UP000008199">
    <property type="component" value="Chromosome"/>
</dbReference>
<dbReference type="GO" id="GO:0005737">
    <property type="term" value="C:cytoplasm"/>
    <property type="evidence" value="ECO:0007669"/>
    <property type="project" value="UniProtKB-SubCell"/>
</dbReference>
<dbReference type="GO" id="GO:0005524">
    <property type="term" value="F:ATP binding"/>
    <property type="evidence" value="ECO:0007669"/>
    <property type="project" value="InterPro"/>
</dbReference>
<dbReference type="GO" id="GO:0031072">
    <property type="term" value="F:heat shock protein binding"/>
    <property type="evidence" value="ECO:0007669"/>
    <property type="project" value="InterPro"/>
</dbReference>
<dbReference type="GO" id="GO:0051082">
    <property type="term" value="F:unfolded protein binding"/>
    <property type="evidence" value="ECO:0007669"/>
    <property type="project" value="UniProtKB-UniRule"/>
</dbReference>
<dbReference type="GO" id="GO:0008270">
    <property type="term" value="F:zinc ion binding"/>
    <property type="evidence" value="ECO:0007669"/>
    <property type="project" value="UniProtKB-UniRule"/>
</dbReference>
<dbReference type="GO" id="GO:0051085">
    <property type="term" value="P:chaperone cofactor-dependent protein refolding"/>
    <property type="evidence" value="ECO:0007669"/>
    <property type="project" value="TreeGrafter"/>
</dbReference>
<dbReference type="GO" id="GO:0006260">
    <property type="term" value="P:DNA replication"/>
    <property type="evidence" value="ECO:0007669"/>
    <property type="project" value="UniProtKB-KW"/>
</dbReference>
<dbReference type="GO" id="GO:0042026">
    <property type="term" value="P:protein refolding"/>
    <property type="evidence" value="ECO:0007669"/>
    <property type="project" value="TreeGrafter"/>
</dbReference>
<dbReference type="GO" id="GO:0009408">
    <property type="term" value="P:response to heat"/>
    <property type="evidence" value="ECO:0007669"/>
    <property type="project" value="InterPro"/>
</dbReference>
<dbReference type="CDD" id="cd06257">
    <property type="entry name" value="DnaJ"/>
    <property type="match status" value="1"/>
</dbReference>
<dbReference type="CDD" id="cd10747">
    <property type="entry name" value="DnaJ_C"/>
    <property type="match status" value="1"/>
</dbReference>
<dbReference type="CDD" id="cd10719">
    <property type="entry name" value="DnaJ_zf"/>
    <property type="match status" value="1"/>
</dbReference>
<dbReference type="FunFam" id="1.10.287.110:FF:000003">
    <property type="entry name" value="Molecular chaperone DnaJ"/>
    <property type="match status" value="1"/>
</dbReference>
<dbReference type="FunFam" id="2.10.230.10:FF:000002">
    <property type="entry name" value="Molecular chaperone DnaJ"/>
    <property type="match status" value="1"/>
</dbReference>
<dbReference type="FunFam" id="2.60.260.20:FF:000004">
    <property type="entry name" value="Molecular chaperone DnaJ"/>
    <property type="match status" value="1"/>
</dbReference>
<dbReference type="Gene3D" id="1.10.287.110">
    <property type="entry name" value="DnaJ domain"/>
    <property type="match status" value="1"/>
</dbReference>
<dbReference type="Gene3D" id="2.10.230.10">
    <property type="entry name" value="Heat shock protein DnaJ, cysteine-rich domain"/>
    <property type="match status" value="1"/>
</dbReference>
<dbReference type="Gene3D" id="2.60.260.20">
    <property type="entry name" value="Urease metallochaperone UreE, N-terminal domain"/>
    <property type="match status" value="2"/>
</dbReference>
<dbReference type="HAMAP" id="MF_01152">
    <property type="entry name" value="DnaJ"/>
    <property type="match status" value="1"/>
</dbReference>
<dbReference type="InterPro" id="IPR012724">
    <property type="entry name" value="DnaJ"/>
</dbReference>
<dbReference type="InterPro" id="IPR002939">
    <property type="entry name" value="DnaJ_C"/>
</dbReference>
<dbReference type="InterPro" id="IPR001623">
    <property type="entry name" value="DnaJ_domain"/>
</dbReference>
<dbReference type="InterPro" id="IPR018253">
    <property type="entry name" value="DnaJ_domain_CS"/>
</dbReference>
<dbReference type="InterPro" id="IPR008971">
    <property type="entry name" value="HSP40/DnaJ_pept-bd"/>
</dbReference>
<dbReference type="InterPro" id="IPR001305">
    <property type="entry name" value="HSP_DnaJ_Cys-rich_dom"/>
</dbReference>
<dbReference type="InterPro" id="IPR036410">
    <property type="entry name" value="HSP_DnaJ_Cys-rich_dom_sf"/>
</dbReference>
<dbReference type="InterPro" id="IPR036869">
    <property type="entry name" value="J_dom_sf"/>
</dbReference>
<dbReference type="NCBIfam" id="TIGR02349">
    <property type="entry name" value="DnaJ_bact"/>
    <property type="match status" value="1"/>
</dbReference>
<dbReference type="NCBIfam" id="NF008035">
    <property type="entry name" value="PRK10767.1"/>
    <property type="match status" value="1"/>
</dbReference>
<dbReference type="PANTHER" id="PTHR43096:SF48">
    <property type="entry name" value="CHAPERONE PROTEIN DNAJ"/>
    <property type="match status" value="1"/>
</dbReference>
<dbReference type="PANTHER" id="PTHR43096">
    <property type="entry name" value="DNAJ HOMOLOG 1, MITOCHONDRIAL-RELATED"/>
    <property type="match status" value="1"/>
</dbReference>
<dbReference type="Pfam" id="PF00226">
    <property type="entry name" value="DnaJ"/>
    <property type="match status" value="1"/>
</dbReference>
<dbReference type="Pfam" id="PF01556">
    <property type="entry name" value="DnaJ_C"/>
    <property type="match status" value="1"/>
</dbReference>
<dbReference type="Pfam" id="PF00684">
    <property type="entry name" value="DnaJ_CXXCXGXG"/>
    <property type="match status" value="1"/>
</dbReference>
<dbReference type="PRINTS" id="PR00625">
    <property type="entry name" value="JDOMAIN"/>
</dbReference>
<dbReference type="SMART" id="SM00271">
    <property type="entry name" value="DnaJ"/>
    <property type="match status" value="1"/>
</dbReference>
<dbReference type="SUPFAM" id="SSF46565">
    <property type="entry name" value="Chaperone J-domain"/>
    <property type="match status" value="1"/>
</dbReference>
<dbReference type="SUPFAM" id="SSF57938">
    <property type="entry name" value="DnaJ/Hsp40 cysteine-rich domain"/>
    <property type="match status" value="1"/>
</dbReference>
<dbReference type="SUPFAM" id="SSF49493">
    <property type="entry name" value="HSP40/DnaJ peptide-binding domain"/>
    <property type="match status" value="2"/>
</dbReference>
<dbReference type="PROSITE" id="PS00636">
    <property type="entry name" value="DNAJ_1"/>
    <property type="match status" value="1"/>
</dbReference>
<dbReference type="PROSITE" id="PS50076">
    <property type="entry name" value="DNAJ_2"/>
    <property type="match status" value="1"/>
</dbReference>
<dbReference type="PROSITE" id="PS51188">
    <property type="entry name" value="ZF_CR"/>
    <property type="match status" value="1"/>
</dbReference>
<protein>
    <recommendedName>
        <fullName evidence="1">Chaperone protein DnaJ</fullName>
    </recommendedName>
</protein>
<accession>B6HZ11</accession>
<gene>
    <name evidence="1" type="primary">dnaJ</name>
    <name type="ordered locus">ECSE_0014</name>
</gene>
<feature type="chain" id="PRO_1000137688" description="Chaperone protein DnaJ">
    <location>
        <begin position="1"/>
        <end position="376"/>
    </location>
</feature>
<feature type="domain" description="J" evidence="1">
    <location>
        <begin position="5"/>
        <end position="70"/>
    </location>
</feature>
<feature type="repeat" description="CXXCXGXG motif">
    <location>
        <begin position="144"/>
        <end position="151"/>
    </location>
</feature>
<feature type="repeat" description="CXXCXGXG motif">
    <location>
        <begin position="161"/>
        <end position="168"/>
    </location>
</feature>
<feature type="repeat" description="CXXCXGXG motif">
    <location>
        <begin position="183"/>
        <end position="190"/>
    </location>
</feature>
<feature type="repeat" description="CXXCXGXG motif">
    <location>
        <begin position="197"/>
        <end position="204"/>
    </location>
</feature>
<feature type="zinc finger region" description="CR-type" evidence="1">
    <location>
        <begin position="131"/>
        <end position="209"/>
    </location>
</feature>
<feature type="binding site" evidence="1">
    <location>
        <position position="144"/>
    </location>
    <ligand>
        <name>Zn(2+)</name>
        <dbReference type="ChEBI" id="CHEBI:29105"/>
        <label>1</label>
    </ligand>
</feature>
<feature type="binding site" evidence="1">
    <location>
        <position position="147"/>
    </location>
    <ligand>
        <name>Zn(2+)</name>
        <dbReference type="ChEBI" id="CHEBI:29105"/>
        <label>1</label>
    </ligand>
</feature>
<feature type="binding site" evidence="1">
    <location>
        <position position="161"/>
    </location>
    <ligand>
        <name>Zn(2+)</name>
        <dbReference type="ChEBI" id="CHEBI:29105"/>
        <label>2</label>
    </ligand>
</feature>
<feature type="binding site" evidence="1">
    <location>
        <position position="164"/>
    </location>
    <ligand>
        <name>Zn(2+)</name>
        <dbReference type="ChEBI" id="CHEBI:29105"/>
        <label>2</label>
    </ligand>
</feature>
<feature type="binding site" evidence="1">
    <location>
        <position position="183"/>
    </location>
    <ligand>
        <name>Zn(2+)</name>
        <dbReference type="ChEBI" id="CHEBI:29105"/>
        <label>2</label>
    </ligand>
</feature>
<feature type="binding site" evidence="1">
    <location>
        <position position="186"/>
    </location>
    <ligand>
        <name>Zn(2+)</name>
        <dbReference type="ChEBI" id="CHEBI:29105"/>
        <label>2</label>
    </ligand>
</feature>
<feature type="binding site" evidence="1">
    <location>
        <position position="197"/>
    </location>
    <ligand>
        <name>Zn(2+)</name>
        <dbReference type="ChEBI" id="CHEBI:29105"/>
        <label>1</label>
    </ligand>
</feature>
<feature type="binding site" evidence="1">
    <location>
        <position position="200"/>
    </location>
    <ligand>
        <name>Zn(2+)</name>
        <dbReference type="ChEBI" id="CHEBI:29105"/>
        <label>1</label>
    </ligand>
</feature>
<reference key="1">
    <citation type="journal article" date="2008" name="DNA Res.">
        <title>Complete genome sequence and comparative analysis of the wild-type commensal Escherichia coli strain SE11 isolated from a healthy adult.</title>
        <authorList>
            <person name="Oshima K."/>
            <person name="Toh H."/>
            <person name="Ogura Y."/>
            <person name="Sasamoto H."/>
            <person name="Morita H."/>
            <person name="Park S.-H."/>
            <person name="Ooka T."/>
            <person name="Iyoda S."/>
            <person name="Taylor T.D."/>
            <person name="Hayashi T."/>
            <person name="Itoh K."/>
            <person name="Hattori M."/>
        </authorList>
    </citation>
    <scope>NUCLEOTIDE SEQUENCE [LARGE SCALE GENOMIC DNA]</scope>
    <source>
        <strain>SE11</strain>
    </source>
</reference>
<name>DNAJ_ECOSE</name>
<proteinExistence type="inferred from homology"/>
<sequence>MAKQDYYEILGVSKTAEEREIKKAYKRLAMKYHPDRNQGDKEAEAKFKEIKEAYEVLTDSQKRAAYDQYGHAAFEQGGMGGGGFGGGADFSDIFGDVFGDIFGGGRGRQRAARGADLRYNMELTLEEAVRGVTKEIRIPTLEECDVCHGSGAKPGTQPQTCPTCHGSGQVQMRQGFFAVQQTCPHCQGRGTLIKDPCNKCHGHGRVERSKTLSVKIPAGVDTGDRIRLAGEGEAGEHGAPAGDLYVQVQVKQHPIFEREGNNLYCEVPINFAMAALGGEIEVPTLDGRVKLKVPGETQTGKLFRMRGKGVKSVRGGAQGDLLCRVVVETPVGLNEKQKQLLQELQESFGGPTGEHNSPRSKSFFDGVKKFFDDLTR</sequence>
<keyword id="KW-0143">Chaperone</keyword>
<keyword id="KW-0963">Cytoplasm</keyword>
<keyword id="KW-0235">DNA replication</keyword>
<keyword id="KW-0479">Metal-binding</keyword>
<keyword id="KW-0677">Repeat</keyword>
<keyword id="KW-0346">Stress response</keyword>
<keyword id="KW-0862">Zinc</keyword>
<keyword id="KW-0863">Zinc-finger</keyword>
<organism>
    <name type="scientific">Escherichia coli (strain SE11)</name>
    <dbReference type="NCBI Taxonomy" id="409438"/>
    <lineage>
        <taxon>Bacteria</taxon>
        <taxon>Pseudomonadati</taxon>
        <taxon>Pseudomonadota</taxon>
        <taxon>Gammaproteobacteria</taxon>
        <taxon>Enterobacterales</taxon>
        <taxon>Enterobacteriaceae</taxon>
        <taxon>Escherichia</taxon>
    </lineage>
</organism>